<proteinExistence type="evidence at protein level"/>
<protein>
    <recommendedName>
        <fullName>Hemagglutinin glycoprotein</fullName>
    </recommendedName>
</protein>
<gene>
    <name type="primary">H</name>
</gene>
<comment type="function">
    <text evidence="2 3 5">Attaches the virus to the human SLAMF1/CD150 receptor for entry into host dendritic cells, macrophages, activated memory T cells and naive or memory B cells, thereby explaining the long immunosuppression that follows infection (By similarity). In the respiratory airways, binds to the NECTIN4 receptor for entry into the host cell (By similarity). Binding of H protein to the receptor induces a conformational change that allows the F protein to trigger virion/cell membranes fusion (By similarity). The vaccine and laboratory-adapted strains use host CD46 as an alternate receptor (PubMed:12029158). The high degree of interaction between H and CD46 results in down-regulation of the latter from the surface of infected cells, rendering them more sensitive to c3b-mediated complement lysis (By similarity).</text>
</comment>
<comment type="subunit">
    <text evidence="2 3 5 7">Homodimer; disulfide-linked (By similarity). Further forms homotetramer (dimer of dimers) (By similarity). Interacts (via C-terminus) with human NECTIN4 (via N-terminus); this interaction allows attachment to the respiratory epithelium and viral entry (By similarity). Interacts (via C-terminus) with human SLAMF1/CD150 (via N-terminus); this interaction allows attachment and viral entry into the CD150-expressing immune cells (Probable). Interacts with human CD46 antigen (PubMed:12029158).</text>
</comment>
<comment type="subcellular location">
    <subcellularLocation>
        <location evidence="6">Virion membrane</location>
        <topology evidence="6">Single-pass type II membrane protein</topology>
    </subcellularLocation>
    <subcellularLocation>
        <location evidence="1">Host cell membrane</location>
        <topology evidence="1">Single-pass type II membrane protein</topology>
    </subcellularLocation>
</comment>
<comment type="miscellaneous">
    <text evidence="3">Infecting host innate immune cells allows the virus to disseminate from the upper respiratory tract to lymphoid organs, and later back to the respiratory tract.</text>
</comment>
<comment type="similarity">
    <text evidence="6">Belongs to the paramyxoviruses hemagglutinin-neuraminidase family. Non-sialidase subfamily.</text>
</comment>
<comment type="caution">
    <text evidence="6">Morbiliviruses hemagglutinins have no neuraminidase activity.</text>
</comment>
<reference key="1">
    <citation type="journal article" date="1993" name="Virus Genes">
        <title>Molecular cloning and complete nucleotide sequence of genomic RNA of the AIK-C strain of attenuated measles virus.</title>
        <authorList>
            <person name="Mori T."/>
            <person name="Sasaki K."/>
            <person name="Hashimoto H."/>
            <person name="Makino S."/>
        </authorList>
    </citation>
    <scope>NUCLEOTIDE SEQUENCE [GENOMIC RNA]</scope>
</reference>
<reference key="2">
    <citation type="journal article" date="2002" name="J. Gen. Virol.">
        <title>Analysis of receptor (CD46, CD150) usage by measles virus.</title>
        <authorList>
            <person name="Erlenhofer C."/>
            <person name="Duprex W.P."/>
            <person name="Rima B.K."/>
            <person name="ter Meulen V."/>
            <person name="Schneider-Schaulies J."/>
        </authorList>
    </citation>
    <scope>INTERACTION WITH HUMAN CD46 AND SLAMF1</scope>
</reference>
<dbReference type="EMBL" id="S58435">
    <property type="protein sequence ID" value="AAB26146.1"/>
    <property type="molecule type" value="Genomic_RNA"/>
</dbReference>
<dbReference type="PIR" id="F48556">
    <property type="entry name" value="F48556"/>
</dbReference>
<dbReference type="SMR" id="P35971"/>
<dbReference type="IntAct" id="P35971">
    <property type="interactions" value="1"/>
</dbReference>
<dbReference type="GlyCosmos" id="P35971">
    <property type="glycosylation" value="5 sites, No reported glycans"/>
</dbReference>
<dbReference type="Proteomes" id="UP000007775">
    <property type="component" value="Genome"/>
</dbReference>
<dbReference type="GO" id="GO:0020002">
    <property type="term" value="C:host cell plasma membrane"/>
    <property type="evidence" value="ECO:0007669"/>
    <property type="project" value="UniProtKB-SubCell"/>
</dbReference>
<dbReference type="GO" id="GO:0016020">
    <property type="term" value="C:membrane"/>
    <property type="evidence" value="ECO:0007669"/>
    <property type="project" value="UniProtKB-KW"/>
</dbReference>
<dbReference type="GO" id="GO:0019031">
    <property type="term" value="C:viral envelope"/>
    <property type="evidence" value="ECO:0007669"/>
    <property type="project" value="UniProtKB-KW"/>
</dbReference>
<dbReference type="GO" id="GO:0055036">
    <property type="term" value="C:virion membrane"/>
    <property type="evidence" value="ECO:0007669"/>
    <property type="project" value="UniProtKB-SubCell"/>
</dbReference>
<dbReference type="GO" id="GO:0046789">
    <property type="term" value="F:host cell surface receptor binding"/>
    <property type="evidence" value="ECO:0007669"/>
    <property type="project" value="InterPro"/>
</dbReference>
<dbReference type="GO" id="GO:0046718">
    <property type="term" value="P:symbiont entry into host cell"/>
    <property type="evidence" value="ECO:0007669"/>
    <property type="project" value="UniProtKB-KW"/>
</dbReference>
<dbReference type="GO" id="GO:0019062">
    <property type="term" value="P:virion attachment to host cell"/>
    <property type="evidence" value="ECO:0007669"/>
    <property type="project" value="UniProtKB-KW"/>
</dbReference>
<dbReference type="CDD" id="cd15467">
    <property type="entry name" value="MV-h"/>
    <property type="match status" value="1"/>
</dbReference>
<dbReference type="FunFam" id="2.120.10.10:FF:000007">
    <property type="entry name" value="Hemagglutinin glycoprotein"/>
    <property type="match status" value="1"/>
</dbReference>
<dbReference type="Gene3D" id="2.120.10.10">
    <property type="match status" value="1"/>
</dbReference>
<dbReference type="InterPro" id="IPR000665">
    <property type="entry name" value="Hemagglutn/HN"/>
</dbReference>
<dbReference type="InterPro" id="IPR049617">
    <property type="entry name" value="MV-h_C"/>
</dbReference>
<dbReference type="InterPro" id="IPR036278">
    <property type="entry name" value="Sialidase_sf"/>
</dbReference>
<dbReference type="Pfam" id="PF00423">
    <property type="entry name" value="HN"/>
    <property type="match status" value="1"/>
</dbReference>
<dbReference type="SUPFAM" id="SSF50939">
    <property type="entry name" value="Sialidases"/>
    <property type="match status" value="1"/>
</dbReference>
<name>HEMA_MEASA</name>
<feature type="chain" id="PRO_0000142598" description="Hemagglutinin glycoprotein">
    <location>
        <begin position="1"/>
        <end position="617"/>
    </location>
</feature>
<feature type="topological domain" description="Intravirion" evidence="4">
    <location>
        <begin position="1"/>
        <end position="37"/>
    </location>
</feature>
<feature type="transmembrane region" description="Helical; Signal-anchor for type II membrane protein" evidence="4">
    <location>
        <begin position="38"/>
        <end position="58"/>
    </location>
</feature>
<feature type="topological domain" description="Virion surface" evidence="4">
    <location>
        <begin position="59"/>
        <end position="617"/>
    </location>
</feature>
<feature type="region of interest" description="Stalk" evidence="2">
    <location>
        <begin position="1"/>
        <end position="154"/>
    </location>
</feature>
<feature type="region of interest" description="Interaction with host NECTIN4 receptor" evidence="3">
    <location>
        <begin position="458"/>
        <end position="543"/>
    </location>
</feature>
<feature type="site" description="Interaction with host SLAMF1 receptor" evidence="2">
    <location>
        <position position="483"/>
    </location>
</feature>
<feature type="site" description="Interaction with host SLAMF1 receptor" evidence="2">
    <location>
        <position position="505"/>
    </location>
</feature>
<feature type="site" description="Interaction with host SLAMF1 receptor" evidence="2">
    <location>
        <position position="507"/>
    </location>
</feature>
<feature type="site" description="Interaction with host SLAMF1 receptor" evidence="2">
    <location>
        <position position="524"/>
    </location>
</feature>
<feature type="site" description="Interaction with host SLAMF1 receptor" evidence="2">
    <location>
        <position position="530"/>
    </location>
</feature>
<feature type="site" description="Interaction with host SLAMF1 receptor" evidence="2">
    <location>
        <position position="533"/>
    </location>
</feature>
<feature type="site" description="Interaction with host SLAMF1 receptor" evidence="2">
    <location>
        <position position="541"/>
    </location>
</feature>
<feature type="site" description="Interaction with host SLAMF1 receptor" evidence="2">
    <location>
        <position position="543"/>
    </location>
</feature>
<feature type="site" description="Interaction with host SLAMF1 receptor" evidence="2">
    <location>
        <position position="545"/>
    </location>
</feature>
<feature type="site" description="Interaction with host SLAMF1 receptor" evidence="2">
    <location>
        <position position="552"/>
    </location>
</feature>
<feature type="site" description="Interaction with host SLAMF1 receptor" evidence="2">
    <location>
        <position position="554"/>
    </location>
</feature>
<feature type="glycosylation site" description="N-linked (GlcNAc...) asparagine; by host" evidence="4">
    <location>
        <position position="168"/>
    </location>
</feature>
<feature type="glycosylation site" description="N-linked (GlcNAc...) asparagine; by host" evidence="4">
    <location>
        <position position="187"/>
    </location>
</feature>
<feature type="glycosylation site" description="N-linked (GlcNAc...) asparagine; by host" evidence="4">
    <location>
        <position position="200"/>
    </location>
</feature>
<feature type="glycosylation site" description="N-linked (GlcNAc...) asparagine; by host" evidence="4">
    <location>
        <position position="215"/>
    </location>
</feature>
<feature type="glycosylation site" description="N-linked (GlcNAc...) asparagine; by host" evidence="4">
    <location>
        <position position="238"/>
    </location>
</feature>
<feature type="disulfide bond" description="Interchain" evidence="2">
    <location>
        <position position="139"/>
    </location>
</feature>
<feature type="disulfide bond" description="Interchain" evidence="2">
    <location>
        <position position="154"/>
    </location>
</feature>
<feature type="disulfide bond" evidence="2">
    <location>
        <begin position="188"/>
        <end position="606"/>
    </location>
</feature>
<feature type="disulfide bond" evidence="2">
    <location>
        <begin position="287"/>
        <end position="300"/>
    </location>
</feature>
<feature type="disulfide bond" evidence="2">
    <location>
        <begin position="381"/>
        <end position="494"/>
    </location>
</feature>
<feature type="disulfide bond" evidence="2">
    <location>
        <begin position="386"/>
        <end position="394"/>
    </location>
</feature>
<feature type="disulfide bond" evidence="2">
    <location>
        <begin position="570"/>
        <end position="579"/>
    </location>
</feature>
<keyword id="KW-1015">Disulfide bond</keyword>
<keyword id="KW-0325">Glycoprotein</keyword>
<keyword id="KW-0348">Hemagglutinin</keyword>
<keyword id="KW-1032">Host cell membrane</keyword>
<keyword id="KW-1043">Host membrane</keyword>
<keyword id="KW-0945">Host-virus interaction</keyword>
<keyword id="KW-0472">Membrane</keyword>
<keyword id="KW-0735">Signal-anchor</keyword>
<keyword id="KW-0812">Transmembrane</keyword>
<keyword id="KW-1133">Transmembrane helix</keyword>
<keyword id="KW-1161">Viral attachment to host cell</keyword>
<keyword id="KW-0261">Viral envelope protein</keyword>
<keyword id="KW-0946">Virion</keyword>
<keyword id="KW-1160">Virus entry into host cell</keyword>
<organismHost>
    <name type="scientific">Homo sapiens</name>
    <name type="common">Human</name>
    <dbReference type="NCBI Taxonomy" id="9606"/>
</organismHost>
<accession>P35971</accession>
<sequence length="617" mass="69323">MSPQRDRINAFYKDNPHPKGSRIVINREHLMIDRPYVLLAVLFVMFLSLIGLLAIAGIRLHRAAIYTAEIHKSLSTNLDVTNSIEHQVKDVLTPLFKIIGDEVGLRTPQRFTDLVKFISDKIKFLNPDREYDFRDLTWCINPPERIKLDYDQYCADVAAEELMNALVNSTLLETRTTNQFLAVSKGNCSGPTTIRGQFSNMSLSLLDLYLGRGYNVSSIVTMTSQGMYGGTYLVEKPNLSSKRSELSQLSMYRVFEVGVIRNPGLGAPVFHMTNYLEQPVSNDLSNCMVALGELKLAALCHREDSITIPYQGSGKGVSFQLVKLGVWKSPTDMQSWVTLSTDDPVIDRLYLSSHRGVIADNQAKWAVPTTRTDDKLRMETCFQQACKGKIQALCENPEWAPLKDNRIPSYGVLSVDLSLTVELKIKIASGFGPLITHGSGMDLYKSNHNNVYWLTIPPMKNLALGVINTLEWIPRFKVSPYLFNVPIKEAGEDCHAPTYLPAEVDGDVKLSSNLVILPGQDLQYVLATYDTSRVEHAVVYYVYSPSRSFSYFYPFRLPIKGVPIELQVECFTWDQKLWCRHFCVLADSESGGHITHSGMVGMGVSCTVTREDGTNRR</sequence>
<evidence type="ECO:0000250" key="1"/>
<evidence type="ECO:0000250" key="2">
    <source>
        <dbReference type="UniProtKB" id="P08362"/>
    </source>
</evidence>
<evidence type="ECO:0000250" key="3">
    <source>
        <dbReference type="UniProtKB" id="Q786F2"/>
    </source>
</evidence>
<evidence type="ECO:0000255" key="4"/>
<evidence type="ECO:0000269" key="5">
    <source>
    </source>
</evidence>
<evidence type="ECO:0000305" key="6"/>
<evidence type="ECO:0000305" key="7">
    <source>
    </source>
</evidence>
<organism>
    <name type="scientific">Measles virus (strain Edmonston-AIK-C vaccine)</name>
    <name type="common">MeV</name>
    <name type="synonym">Subacute sclerose panencephalitis virus</name>
    <dbReference type="NCBI Taxonomy" id="36408"/>
    <lineage>
        <taxon>Viruses</taxon>
        <taxon>Riboviria</taxon>
        <taxon>Orthornavirae</taxon>
        <taxon>Negarnaviricota</taxon>
        <taxon>Haploviricotina</taxon>
        <taxon>Monjiviricetes</taxon>
        <taxon>Mononegavirales</taxon>
        <taxon>Paramyxoviridae</taxon>
        <taxon>Orthoparamyxovirinae</taxon>
        <taxon>Morbillivirus</taxon>
        <taxon>Morbillivirus hominis</taxon>
        <taxon>Measles morbillivirus</taxon>
    </lineage>
</organism>